<accession>B3GXI4</accession>
<organism>
    <name type="scientific">Actinobacillus pleuropneumoniae serotype 7 (strain AP76)</name>
    <dbReference type="NCBI Taxonomy" id="537457"/>
    <lineage>
        <taxon>Bacteria</taxon>
        <taxon>Pseudomonadati</taxon>
        <taxon>Pseudomonadota</taxon>
        <taxon>Gammaproteobacteria</taxon>
        <taxon>Pasteurellales</taxon>
        <taxon>Pasteurellaceae</taxon>
        <taxon>Actinobacillus</taxon>
    </lineage>
</organism>
<feature type="chain" id="PRO_1000115322" description="Chorismate synthase">
    <location>
        <begin position="1"/>
        <end position="360"/>
    </location>
</feature>
<feature type="binding site" evidence="1">
    <location>
        <position position="48"/>
    </location>
    <ligand>
        <name>NADP(+)</name>
        <dbReference type="ChEBI" id="CHEBI:58349"/>
    </ligand>
</feature>
<feature type="binding site" evidence="1">
    <location>
        <position position="54"/>
    </location>
    <ligand>
        <name>NADP(+)</name>
        <dbReference type="ChEBI" id="CHEBI:58349"/>
    </ligand>
</feature>
<feature type="binding site" evidence="1">
    <location>
        <begin position="125"/>
        <end position="127"/>
    </location>
    <ligand>
        <name>FMN</name>
        <dbReference type="ChEBI" id="CHEBI:58210"/>
    </ligand>
</feature>
<feature type="binding site" evidence="1">
    <location>
        <begin position="246"/>
        <end position="247"/>
    </location>
    <ligand>
        <name>FMN</name>
        <dbReference type="ChEBI" id="CHEBI:58210"/>
    </ligand>
</feature>
<feature type="binding site" evidence="1">
    <location>
        <position position="286"/>
    </location>
    <ligand>
        <name>FMN</name>
        <dbReference type="ChEBI" id="CHEBI:58210"/>
    </ligand>
</feature>
<feature type="binding site" evidence="1">
    <location>
        <begin position="301"/>
        <end position="305"/>
    </location>
    <ligand>
        <name>FMN</name>
        <dbReference type="ChEBI" id="CHEBI:58210"/>
    </ligand>
</feature>
<feature type="binding site" evidence="1">
    <location>
        <position position="327"/>
    </location>
    <ligand>
        <name>FMN</name>
        <dbReference type="ChEBI" id="CHEBI:58210"/>
    </ligand>
</feature>
<evidence type="ECO:0000255" key="1">
    <source>
        <dbReference type="HAMAP-Rule" id="MF_00300"/>
    </source>
</evidence>
<keyword id="KW-0028">Amino-acid biosynthesis</keyword>
<keyword id="KW-0057">Aromatic amino acid biosynthesis</keyword>
<keyword id="KW-0274">FAD</keyword>
<keyword id="KW-0285">Flavoprotein</keyword>
<keyword id="KW-0288">FMN</keyword>
<keyword id="KW-0456">Lyase</keyword>
<keyword id="KW-0521">NADP</keyword>
<gene>
    <name evidence="1" type="primary">aroC</name>
    <name type="ordered locus">APP7_0791</name>
</gene>
<protein>
    <recommendedName>
        <fullName evidence="1">Chorismate synthase</fullName>
        <shortName evidence="1">CS</shortName>
        <ecNumber evidence="1">4.2.3.5</ecNumber>
    </recommendedName>
    <alternativeName>
        <fullName evidence="1">5-enolpyruvylshikimate-3-phosphate phospholyase</fullName>
    </alternativeName>
</protein>
<comment type="function">
    <text evidence="1">Catalyzes the anti-1,4-elimination of the C-3 phosphate and the C-6 proR hydrogen from 5-enolpyruvylshikimate-3-phosphate (EPSP) to yield chorismate, which is the branch point compound that serves as the starting substrate for the three terminal pathways of aromatic amino acid biosynthesis. This reaction introduces a second double bond into the aromatic ring system.</text>
</comment>
<comment type="catalytic activity">
    <reaction evidence="1">
        <text>5-O-(1-carboxyvinyl)-3-phosphoshikimate = chorismate + phosphate</text>
        <dbReference type="Rhea" id="RHEA:21020"/>
        <dbReference type="ChEBI" id="CHEBI:29748"/>
        <dbReference type="ChEBI" id="CHEBI:43474"/>
        <dbReference type="ChEBI" id="CHEBI:57701"/>
        <dbReference type="EC" id="4.2.3.5"/>
    </reaction>
</comment>
<comment type="cofactor">
    <cofactor evidence="1">
        <name>FMNH2</name>
        <dbReference type="ChEBI" id="CHEBI:57618"/>
    </cofactor>
    <text evidence="1">Reduced FMN (FMNH(2)).</text>
</comment>
<comment type="pathway">
    <text evidence="1">Metabolic intermediate biosynthesis; chorismate biosynthesis; chorismate from D-erythrose 4-phosphate and phosphoenolpyruvate: step 7/7.</text>
</comment>
<comment type="subunit">
    <text evidence="1">Homotetramer.</text>
</comment>
<comment type="similarity">
    <text evidence="1">Belongs to the chorismate synthase family.</text>
</comment>
<proteinExistence type="inferred from homology"/>
<name>AROC_ACTP7</name>
<reference key="1">
    <citation type="submission" date="2008-06" db="EMBL/GenBank/DDBJ databases">
        <title>Genome and proteome analysis of A. pleuropneumoniae serotype 7.</title>
        <authorList>
            <person name="Linke B."/>
            <person name="Buettner F."/>
            <person name="Martinez-Arias R."/>
            <person name="Goesmann A."/>
            <person name="Baltes N."/>
            <person name="Tegetmeyer H."/>
            <person name="Singh M."/>
            <person name="Gerlach G.F."/>
        </authorList>
    </citation>
    <scope>NUCLEOTIDE SEQUENCE [LARGE SCALE GENOMIC DNA]</scope>
    <source>
        <strain>AP76</strain>
    </source>
</reference>
<sequence>MAGNSIGQLFKVTTFGESHGIALGCIVDGVPPNMALSEADIQPDLDRRKPGTSRYTTPRREDDEVQILSGVFEGKTTGTSIGLIIKNADQRSKDYGDIADKFRPGHADYTYQQKYGIRDYRGGGRSSARETAMRVAAGAIAKKYLREQFGIEVRGYLSQIGNVKINPETVADISKIDWQQVASNPFFCPDPVAVEGFDELIRELKKDGDSIGAKLTVVAENVPVGLGEPVFDRLDADLAHALMSINAVKAVEIGDGFDVVEQRGSEHRDEMTPQGFVSNHAGGILGGISSGQPIIAHIALKPTSSIMVPGRSVNLNNEQVELITKGRHDPCVGIRAVPIAEAMTAIILLDHLLRFKAQCR</sequence>
<dbReference type="EC" id="4.2.3.5" evidence="1"/>
<dbReference type="EMBL" id="CP001091">
    <property type="protein sequence ID" value="ACE61443.1"/>
    <property type="molecule type" value="Genomic_DNA"/>
</dbReference>
<dbReference type="RefSeq" id="WP_005607638.1">
    <property type="nucleotide sequence ID" value="NC_010939.1"/>
</dbReference>
<dbReference type="SMR" id="B3GXI4"/>
<dbReference type="KEGG" id="apa:APP7_0791"/>
<dbReference type="HOGENOM" id="CLU_034547_0_2_6"/>
<dbReference type="UniPathway" id="UPA00053">
    <property type="reaction ID" value="UER00090"/>
</dbReference>
<dbReference type="Proteomes" id="UP000001226">
    <property type="component" value="Chromosome"/>
</dbReference>
<dbReference type="GO" id="GO:0005829">
    <property type="term" value="C:cytosol"/>
    <property type="evidence" value="ECO:0007669"/>
    <property type="project" value="TreeGrafter"/>
</dbReference>
<dbReference type="GO" id="GO:0004107">
    <property type="term" value="F:chorismate synthase activity"/>
    <property type="evidence" value="ECO:0007669"/>
    <property type="project" value="UniProtKB-UniRule"/>
</dbReference>
<dbReference type="GO" id="GO:0010181">
    <property type="term" value="F:FMN binding"/>
    <property type="evidence" value="ECO:0007669"/>
    <property type="project" value="TreeGrafter"/>
</dbReference>
<dbReference type="GO" id="GO:0008652">
    <property type="term" value="P:amino acid biosynthetic process"/>
    <property type="evidence" value="ECO:0007669"/>
    <property type="project" value="UniProtKB-KW"/>
</dbReference>
<dbReference type="GO" id="GO:0009073">
    <property type="term" value="P:aromatic amino acid family biosynthetic process"/>
    <property type="evidence" value="ECO:0007669"/>
    <property type="project" value="UniProtKB-KW"/>
</dbReference>
<dbReference type="GO" id="GO:0009423">
    <property type="term" value="P:chorismate biosynthetic process"/>
    <property type="evidence" value="ECO:0007669"/>
    <property type="project" value="UniProtKB-UniRule"/>
</dbReference>
<dbReference type="CDD" id="cd07304">
    <property type="entry name" value="Chorismate_synthase"/>
    <property type="match status" value="1"/>
</dbReference>
<dbReference type="FunFam" id="3.60.150.10:FF:000001">
    <property type="entry name" value="Chorismate synthase"/>
    <property type="match status" value="1"/>
</dbReference>
<dbReference type="Gene3D" id="3.60.150.10">
    <property type="entry name" value="Chorismate synthase AroC"/>
    <property type="match status" value="1"/>
</dbReference>
<dbReference type="HAMAP" id="MF_00300">
    <property type="entry name" value="Chorismate_synth"/>
    <property type="match status" value="1"/>
</dbReference>
<dbReference type="InterPro" id="IPR000453">
    <property type="entry name" value="Chorismate_synth"/>
</dbReference>
<dbReference type="InterPro" id="IPR035904">
    <property type="entry name" value="Chorismate_synth_AroC_sf"/>
</dbReference>
<dbReference type="InterPro" id="IPR020541">
    <property type="entry name" value="Chorismate_synthase_CS"/>
</dbReference>
<dbReference type="NCBIfam" id="TIGR00033">
    <property type="entry name" value="aroC"/>
    <property type="match status" value="1"/>
</dbReference>
<dbReference type="NCBIfam" id="NF003793">
    <property type="entry name" value="PRK05382.1"/>
    <property type="match status" value="1"/>
</dbReference>
<dbReference type="PANTHER" id="PTHR21085">
    <property type="entry name" value="CHORISMATE SYNTHASE"/>
    <property type="match status" value="1"/>
</dbReference>
<dbReference type="PANTHER" id="PTHR21085:SF0">
    <property type="entry name" value="CHORISMATE SYNTHASE"/>
    <property type="match status" value="1"/>
</dbReference>
<dbReference type="Pfam" id="PF01264">
    <property type="entry name" value="Chorismate_synt"/>
    <property type="match status" value="1"/>
</dbReference>
<dbReference type="PIRSF" id="PIRSF001456">
    <property type="entry name" value="Chorismate_synth"/>
    <property type="match status" value="1"/>
</dbReference>
<dbReference type="SUPFAM" id="SSF103263">
    <property type="entry name" value="Chorismate synthase, AroC"/>
    <property type="match status" value="1"/>
</dbReference>
<dbReference type="PROSITE" id="PS00787">
    <property type="entry name" value="CHORISMATE_SYNTHASE_1"/>
    <property type="match status" value="1"/>
</dbReference>
<dbReference type="PROSITE" id="PS00788">
    <property type="entry name" value="CHORISMATE_SYNTHASE_2"/>
    <property type="match status" value="1"/>
</dbReference>
<dbReference type="PROSITE" id="PS00789">
    <property type="entry name" value="CHORISMATE_SYNTHASE_3"/>
    <property type="match status" value="1"/>
</dbReference>